<organism>
    <name type="scientific">Karelsulcia muelleri (strain GWSS)</name>
    <name type="common">Sulcia muelleri</name>
    <dbReference type="NCBI Taxonomy" id="444179"/>
    <lineage>
        <taxon>Bacteria</taxon>
        <taxon>Pseudomonadati</taxon>
        <taxon>Bacteroidota</taxon>
        <taxon>Flavobacteriia</taxon>
        <taxon>Flavobacteriales</taxon>
        <taxon>Candidatus Karelsulcia</taxon>
    </lineage>
</organism>
<protein>
    <recommendedName>
        <fullName evidence="1">Large ribosomal subunit protein uL22</fullName>
    </recommendedName>
    <alternativeName>
        <fullName evidence="2">50S ribosomal protein L22</fullName>
    </alternativeName>
</protein>
<proteinExistence type="inferred from homology"/>
<evidence type="ECO:0000255" key="1">
    <source>
        <dbReference type="HAMAP-Rule" id="MF_01331"/>
    </source>
</evidence>
<evidence type="ECO:0000305" key="2"/>
<gene>
    <name evidence="1" type="primary">rplV</name>
    <name type="ordered locus">SMGWSS_227</name>
</gene>
<name>RL22_KARMG</name>
<keyword id="KW-0687">Ribonucleoprotein</keyword>
<keyword id="KW-0689">Ribosomal protein</keyword>
<keyword id="KW-0694">RNA-binding</keyword>
<keyword id="KW-0699">rRNA-binding</keyword>
<dbReference type="EMBL" id="CP000770">
    <property type="protein sequence ID" value="ABS30624.1"/>
    <property type="molecule type" value="Genomic_DNA"/>
</dbReference>
<dbReference type="SMR" id="A8Z673"/>
<dbReference type="STRING" id="444179.SMGWSS_227"/>
<dbReference type="KEGG" id="smg:SMGWSS_227"/>
<dbReference type="HOGENOM" id="CLU_083987_3_1_10"/>
<dbReference type="Proteomes" id="UP000000781">
    <property type="component" value="Chromosome"/>
</dbReference>
<dbReference type="GO" id="GO:0022625">
    <property type="term" value="C:cytosolic large ribosomal subunit"/>
    <property type="evidence" value="ECO:0007669"/>
    <property type="project" value="TreeGrafter"/>
</dbReference>
<dbReference type="GO" id="GO:0019843">
    <property type="term" value="F:rRNA binding"/>
    <property type="evidence" value="ECO:0007669"/>
    <property type="project" value="UniProtKB-UniRule"/>
</dbReference>
<dbReference type="GO" id="GO:0003735">
    <property type="term" value="F:structural constituent of ribosome"/>
    <property type="evidence" value="ECO:0007669"/>
    <property type="project" value="InterPro"/>
</dbReference>
<dbReference type="GO" id="GO:0006412">
    <property type="term" value="P:translation"/>
    <property type="evidence" value="ECO:0007669"/>
    <property type="project" value="UniProtKB-UniRule"/>
</dbReference>
<dbReference type="Gene3D" id="3.90.470.10">
    <property type="entry name" value="Ribosomal protein L22/L17"/>
    <property type="match status" value="1"/>
</dbReference>
<dbReference type="HAMAP" id="MF_01331_B">
    <property type="entry name" value="Ribosomal_uL22_B"/>
    <property type="match status" value="1"/>
</dbReference>
<dbReference type="InterPro" id="IPR001063">
    <property type="entry name" value="Ribosomal_uL22"/>
</dbReference>
<dbReference type="InterPro" id="IPR005727">
    <property type="entry name" value="Ribosomal_uL22_bac/chlpt-type"/>
</dbReference>
<dbReference type="InterPro" id="IPR047867">
    <property type="entry name" value="Ribosomal_uL22_bac/org-type"/>
</dbReference>
<dbReference type="InterPro" id="IPR036394">
    <property type="entry name" value="Ribosomal_uL22_sf"/>
</dbReference>
<dbReference type="PANTHER" id="PTHR13501">
    <property type="entry name" value="CHLOROPLAST 50S RIBOSOMAL PROTEIN L22-RELATED"/>
    <property type="match status" value="1"/>
</dbReference>
<dbReference type="PANTHER" id="PTHR13501:SF8">
    <property type="entry name" value="LARGE RIBOSOMAL SUBUNIT PROTEIN UL22M"/>
    <property type="match status" value="1"/>
</dbReference>
<dbReference type="Pfam" id="PF00237">
    <property type="entry name" value="Ribosomal_L22"/>
    <property type="match status" value="1"/>
</dbReference>
<dbReference type="SUPFAM" id="SSF54843">
    <property type="entry name" value="Ribosomal protein L22"/>
    <property type="match status" value="1"/>
</dbReference>
<accession>A8Z673</accession>
<comment type="function">
    <text evidence="1">This protein binds specifically to 23S rRNA; its binding is stimulated by other ribosomal proteins, e.g. L4, L17, and L20. It is important during the early stages of 50S assembly. It makes multiple contacts with different domains of the 23S rRNA in the assembled 50S subunit and ribosome (By similarity).</text>
</comment>
<comment type="function">
    <text evidence="1">The globular domain of the protein is located near the polypeptide exit tunnel on the outside of the subunit, while an extended beta-hairpin is found that lines the wall of the exit tunnel in the center of the 70S ribosome.</text>
</comment>
<comment type="subunit">
    <text evidence="1">Part of the 50S ribosomal subunit.</text>
</comment>
<comment type="similarity">
    <text evidence="1">Belongs to the universal ribosomal protein uL22 family.</text>
</comment>
<sequence>MESNNYINFFFKKKKYTKSVADVRNIYCSPRKLRLVADIIRNKKVEYSLFILKNIKNKGGGIIYKILLSVISNWKNYENNINNYNIYIEKVLINQGYQLKKIRPGPQGRGNKVRKRYSNLKIIINSKFNNYYGT</sequence>
<feature type="chain" id="PRO_0000354522" description="Large ribosomal subunit protein uL22">
    <location>
        <begin position="1"/>
        <end position="134"/>
    </location>
</feature>
<reference key="1">
    <citation type="journal article" date="2007" name="Proc. Natl. Acad. Sci. U.S.A.">
        <title>Parallel genomic evolution and metabolic interdependence in an ancient symbiosis.</title>
        <authorList>
            <person name="McCutcheon J.P."/>
            <person name="Moran N.A."/>
        </authorList>
    </citation>
    <scope>NUCLEOTIDE SEQUENCE [LARGE SCALE GENOMIC DNA]</scope>
    <source>
        <strain>GWSS</strain>
    </source>
</reference>